<proteinExistence type="inferred from homology"/>
<reference key="1">
    <citation type="submission" date="2006-06" db="EMBL/GenBank/DDBJ databases">
        <title>Complete sequence of chromosome of Mesorhizobium sp. BNC1.</title>
        <authorList>
            <consortium name="US DOE Joint Genome Institute"/>
            <person name="Copeland A."/>
            <person name="Lucas S."/>
            <person name="Lapidus A."/>
            <person name="Barry K."/>
            <person name="Detter J.C."/>
            <person name="Glavina del Rio T."/>
            <person name="Hammon N."/>
            <person name="Israni S."/>
            <person name="Dalin E."/>
            <person name="Tice H."/>
            <person name="Pitluck S."/>
            <person name="Chertkov O."/>
            <person name="Brettin T."/>
            <person name="Bruce D."/>
            <person name="Han C."/>
            <person name="Tapia R."/>
            <person name="Gilna P."/>
            <person name="Schmutz J."/>
            <person name="Larimer F."/>
            <person name="Land M."/>
            <person name="Hauser L."/>
            <person name="Kyrpides N."/>
            <person name="Mikhailova N."/>
            <person name="Richardson P."/>
        </authorList>
    </citation>
    <scope>NUCLEOTIDE SEQUENCE [LARGE SCALE GENOMIC DNA]</scope>
    <source>
        <strain>BNC1</strain>
    </source>
</reference>
<feature type="chain" id="PRO_0000325556" description="Pantothenate kinase">
    <location>
        <begin position="1"/>
        <end position="319"/>
    </location>
</feature>
<feature type="binding site" evidence="1">
    <location>
        <begin position="97"/>
        <end position="104"/>
    </location>
    <ligand>
        <name>ATP</name>
        <dbReference type="ChEBI" id="CHEBI:30616"/>
    </ligand>
</feature>
<protein>
    <recommendedName>
        <fullName evidence="1">Pantothenate kinase</fullName>
        <ecNumber evidence="1">2.7.1.33</ecNumber>
    </recommendedName>
    <alternativeName>
        <fullName evidence="1">Pantothenic acid kinase</fullName>
    </alternativeName>
</protein>
<gene>
    <name evidence="1" type="primary">coaA</name>
    <name type="ordered locus">Meso_3499</name>
</gene>
<dbReference type="EC" id="2.7.1.33" evidence="1"/>
<dbReference type="EMBL" id="CP000390">
    <property type="protein sequence ID" value="ABG64870.1"/>
    <property type="status" value="ALT_INIT"/>
    <property type="molecule type" value="Genomic_DNA"/>
</dbReference>
<dbReference type="SMR" id="Q11CK5"/>
<dbReference type="STRING" id="266779.Meso_3499"/>
<dbReference type="KEGG" id="mes:Meso_3499"/>
<dbReference type="eggNOG" id="COG1072">
    <property type="taxonomic scope" value="Bacteria"/>
</dbReference>
<dbReference type="HOGENOM" id="CLU_053818_1_1_5"/>
<dbReference type="OrthoDB" id="1550976at2"/>
<dbReference type="UniPathway" id="UPA00241">
    <property type="reaction ID" value="UER00352"/>
</dbReference>
<dbReference type="GO" id="GO:0005737">
    <property type="term" value="C:cytoplasm"/>
    <property type="evidence" value="ECO:0007669"/>
    <property type="project" value="UniProtKB-SubCell"/>
</dbReference>
<dbReference type="GO" id="GO:0005524">
    <property type="term" value="F:ATP binding"/>
    <property type="evidence" value="ECO:0007669"/>
    <property type="project" value="UniProtKB-UniRule"/>
</dbReference>
<dbReference type="GO" id="GO:0004594">
    <property type="term" value="F:pantothenate kinase activity"/>
    <property type="evidence" value="ECO:0007669"/>
    <property type="project" value="UniProtKB-UniRule"/>
</dbReference>
<dbReference type="GO" id="GO:0015937">
    <property type="term" value="P:coenzyme A biosynthetic process"/>
    <property type="evidence" value="ECO:0007669"/>
    <property type="project" value="UniProtKB-UniRule"/>
</dbReference>
<dbReference type="CDD" id="cd02025">
    <property type="entry name" value="PanK"/>
    <property type="match status" value="1"/>
</dbReference>
<dbReference type="Gene3D" id="3.40.50.300">
    <property type="entry name" value="P-loop containing nucleotide triphosphate hydrolases"/>
    <property type="match status" value="1"/>
</dbReference>
<dbReference type="HAMAP" id="MF_00215">
    <property type="entry name" value="Pantothen_kinase_1"/>
    <property type="match status" value="1"/>
</dbReference>
<dbReference type="InterPro" id="IPR027417">
    <property type="entry name" value="P-loop_NTPase"/>
</dbReference>
<dbReference type="InterPro" id="IPR004566">
    <property type="entry name" value="PanK"/>
</dbReference>
<dbReference type="InterPro" id="IPR006083">
    <property type="entry name" value="PRK/URK"/>
</dbReference>
<dbReference type="NCBIfam" id="TIGR00554">
    <property type="entry name" value="panK_bact"/>
    <property type="match status" value="1"/>
</dbReference>
<dbReference type="PANTHER" id="PTHR10285">
    <property type="entry name" value="URIDINE KINASE"/>
    <property type="match status" value="1"/>
</dbReference>
<dbReference type="Pfam" id="PF00485">
    <property type="entry name" value="PRK"/>
    <property type="match status" value="1"/>
</dbReference>
<dbReference type="PIRSF" id="PIRSF000545">
    <property type="entry name" value="Pantothenate_kin"/>
    <property type="match status" value="1"/>
</dbReference>
<dbReference type="SUPFAM" id="SSF52540">
    <property type="entry name" value="P-loop containing nucleoside triphosphate hydrolases"/>
    <property type="match status" value="1"/>
</dbReference>
<accession>Q11CK5</accession>
<name>COAA_CHESB</name>
<keyword id="KW-0067">ATP-binding</keyword>
<keyword id="KW-0173">Coenzyme A biosynthesis</keyword>
<keyword id="KW-0963">Cytoplasm</keyword>
<keyword id="KW-0418">Kinase</keyword>
<keyword id="KW-0547">Nucleotide-binding</keyword>
<keyword id="KW-0808">Transferase</keyword>
<organism>
    <name type="scientific">Chelativorans sp. (strain BNC1)</name>
    <dbReference type="NCBI Taxonomy" id="266779"/>
    <lineage>
        <taxon>Bacteria</taxon>
        <taxon>Pseudomonadati</taxon>
        <taxon>Pseudomonadota</taxon>
        <taxon>Alphaproteobacteria</taxon>
        <taxon>Hyphomicrobiales</taxon>
        <taxon>Phyllobacteriaceae</taxon>
        <taxon>Chelativorans</taxon>
    </lineage>
</organism>
<evidence type="ECO:0000255" key="1">
    <source>
        <dbReference type="HAMAP-Rule" id="MF_00215"/>
    </source>
</evidence>
<evidence type="ECO:0000305" key="2"/>
<sequence>MDQLVPAERYSPYRFFSAEDWAKFRADTPLTLTEDEVRRLRSLNDPVNLEEVRRIYLSMSRLLSAHVEASQLLFQQRQVFFDSDHAVKTPFIIGIAGSVAVGKSTTARVLKELLTRWPSSPKVDLITTDGFLLPNAVLSHEGLMERKGFPESYDVGAILRFLSGIKAGLPNMRAPIYSHLTYDVVPGEFAVIDRPDILIFEGINVLQTRDLPRDGKAVPFVSDFFDFSIYIDAPEELIHEWYVDRFMRLRETAFRDPNSFFHRYSTLPEVEARTIAEELWTNINLKNLRENILPTRPRADLILRKGTNHLVQEVALRKL</sequence>
<comment type="catalytic activity">
    <reaction evidence="1">
        <text>(R)-pantothenate + ATP = (R)-4'-phosphopantothenate + ADP + H(+)</text>
        <dbReference type="Rhea" id="RHEA:16373"/>
        <dbReference type="ChEBI" id="CHEBI:10986"/>
        <dbReference type="ChEBI" id="CHEBI:15378"/>
        <dbReference type="ChEBI" id="CHEBI:29032"/>
        <dbReference type="ChEBI" id="CHEBI:30616"/>
        <dbReference type="ChEBI" id="CHEBI:456216"/>
        <dbReference type="EC" id="2.7.1.33"/>
    </reaction>
</comment>
<comment type="pathway">
    <text evidence="1">Cofactor biosynthesis; coenzyme A biosynthesis; CoA from (R)-pantothenate: step 1/5.</text>
</comment>
<comment type="subcellular location">
    <subcellularLocation>
        <location evidence="1">Cytoplasm</location>
    </subcellularLocation>
</comment>
<comment type="similarity">
    <text evidence="1">Belongs to the prokaryotic pantothenate kinase family.</text>
</comment>
<comment type="sequence caution" evidence="2">
    <conflict type="erroneous initiation">
        <sequence resource="EMBL-CDS" id="ABG64870"/>
    </conflict>
</comment>